<proteinExistence type="evidence at protein level"/>
<keyword id="KW-1267">Proteomics identification</keyword>
<keyword id="KW-1185">Reference proteome</keyword>
<keyword id="KW-0825">Tumor antigen</keyword>
<keyword id="KW-0833">Ubl conjugation pathway</keyword>
<accession>Q9HAY2</accession>
<accession>Q9H215</accession>
<organism>
    <name type="scientific">Homo sapiens</name>
    <name type="common">Human</name>
    <dbReference type="NCBI Taxonomy" id="9606"/>
    <lineage>
        <taxon>Eukaryota</taxon>
        <taxon>Metazoa</taxon>
        <taxon>Chordata</taxon>
        <taxon>Craniata</taxon>
        <taxon>Vertebrata</taxon>
        <taxon>Euteleostomi</taxon>
        <taxon>Mammalia</taxon>
        <taxon>Eutheria</taxon>
        <taxon>Euarchontoglires</taxon>
        <taxon>Primates</taxon>
        <taxon>Haplorrhini</taxon>
        <taxon>Catarrhini</taxon>
        <taxon>Hominidae</taxon>
        <taxon>Homo</taxon>
    </lineage>
</organism>
<name>MAGF1_HUMAN</name>
<reference key="1">
    <citation type="journal article" date="2001" name="Gene">
        <title>MAGE-F1, a novel ubiquitously expressed member of the MAGE superfamily.</title>
        <authorList>
            <person name="Stone B."/>
            <person name="Schummer M."/>
            <person name="Paley P.J."/>
            <person name="Crawford M."/>
            <person name="Ford M."/>
            <person name="Urban N."/>
            <person name="Nelson B.H."/>
        </authorList>
    </citation>
    <scope>NUCLEOTIDE SEQUENCE [MRNA]</scope>
    <scope>TISSUE SPECIFICITY</scope>
</reference>
<reference key="2">
    <citation type="journal article" date="2006" name="Nature">
        <title>The DNA sequence, annotation and analysis of human chromosome 3.</title>
        <authorList>
            <person name="Muzny D.M."/>
            <person name="Scherer S.E."/>
            <person name="Kaul R."/>
            <person name="Wang J."/>
            <person name="Yu J."/>
            <person name="Sudbrak R."/>
            <person name="Buhay C.J."/>
            <person name="Chen R."/>
            <person name="Cree A."/>
            <person name="Ding Y."/>
            <person name="Dugan-Rocha S."/>
            <person name="Gill R."/>
            <person name="Gunaratne P."/>
            <person name="Harris R.A."/>
            <person name="Hawes A.C."/>
            <person name="Hernandez J."/>
            <person name="Hodgson A.V."/>
            <person name="Hume J."/>
            <person name="Jackson A."/>
            <person name="Khan Z.M."/>
            <person name="Kovar-Smith C."/>
            <person name="Lewis L.R."/>
            <person name="Lozado R.J."/>
            <person name="Metzker M.L."/>
            <person name="Milosavljevic A."/>
            <person name="Miner G.R."/>
            <person name="Morgan M.B."/>
            <person name="Nazareth L.V."/>
            <person name="Scott G."/>
            <person name="Sodergren E."/>
            <person name="Song X.-Z."/>
            <person name="Steffen D."/>
            <person name="Wei S."/>
            <person name="Wheeler D.A."/>
            <person name="Wright M.W."/>
            <person name="Worley K.C."/>
            <person name="Yuan Y."/>
            <person name="Zhang Z."/>
            <person name="Adams C.Q."/>
            <person name="Ansari-Lari M.A."/>
            <person name="Ayele M."/>
            <person name="Brown M.J."/>
            <person name="Chen G."/>
            <person name="Chen Z."/>
            <person name="Clendenning J."/>
            <person name="Clerc-Blankenburg K.P."/>
            <person name="Chen R."/>
            <person name="Chen Z."/>
            <person name="Davis C."/>
            <person name="Delgado O."/>
            <person name="Dinh H.H."/>
            <person name="Dong W."/>
            <person name="Draper H."/>
            <person name="Ernst S."/>
            <person name="Fu G."/>
            <person name="Gonzalez-Garay M.L."/>
            <person name="Garcia D.K."/>
            <person name="Gillett W."/>
            <person name="Gu J."/>
            <person name="Hao B."/>
            <person name="Haugen E."/>
            <person name="Havlak P."/>
            <person name="He X."/>
            <person name="Hennig S."/>
            <person name="Hu S."/>
            <person name="Huang W."/>
            <person name="Jackson L.R."/>
            <person name="Jacob L.S."/>
            <person name="Kelly S.H."/>
            <person name="Kube M."/>
            <person name="Levy R."/>
            <person name="Li Z."/>
            <person name="Liu B."/>
            <person name="Liu J."/>
            <person name="Liu W."/>
            <person name="Lu J."/>
            <person name="Maheshwari M."/>
            <person name="Nguyen B.-V."/>
            <person name="Okwuonu G.O."/>
            <person name="Palmeiri A."/>
            <person name="Pasternak S."/>
            <person name="Perez L.M."/>
            <person name="Phelps K.A."/>
            <person name="Plopper F.J."/>
            <person name="Qiang B."/>
            <person name="Raymond C."/>
            <person name="Rodriguez R."/>
            <person name="Saenphimmachak C."/>
            <person name="Santibanez J."/>
            <person name="Shen H."/>
            <person name="Shen Y."/>
            <person name="Subramanian S."/>
            <person name="Tabor P.E."/>
            <person name="Verduzco D."/>
            <person name="Waldron L."/>
            <person name="Wang J."/>
            <person name="Wang J."/>
            <person name="Wang Q."/>
            <person name="Williams G.A."/>
            <person name="Wong G.K.-S."/>
            <person name="Yao Z."/>
            <person name="Zhang J."/>
            <person name="Zhang X."/>
            <person name="Zhao G."/>
            <person name="Zhou J."/>
            <person name="Zhou Y."/>
            <person name="Nelson D."/>
            <person name="Lehrach H."/>
            <person name="Reinhardt R."/>
            <person name="Naylor S.L."/>
            <person name="Yang H."/>
            <person name="Olson M."/>
            <person name="Weinstock G."/>
            <person name="Gibbs R.A."/>
        </authorList>
    </citation>
    <scope>NUCLEOTIDE SEQUENCE [LARGE SCALE GENOMIC DNA]</scope>
</reference>
<reference key="3">
    <citation type="journal article" date="2004" name="Genome Res.">
        <title>The status, quality, and expansion of the NIH full-length cDNA project: the Mammalian Gene Collection (MGC).</title>
        <authorList>
            <consortium name="The MGC Project Team"/>
        </authorList>
    </citation>
    <scope>NUCLEOTIDE SEQUENCE [LARGE SCALE MRNA]</scope>
    <source>
        <tissue>Lung</tissue>
    </source>
</reference>
<reference key="4">
    <citation type="journal article" date="2001" name="Cancer Res.">
        <title>An overview of the MAGE gene family with the identification of all human members of the family.</title>
        <authorList>
            <person name="Chomez P."/>
            <person name="De Backer O."/>
            <person name="Bertrand M."/>
            <person name="De Plaen E."/>
            <person name="Boon T."/>
            <person name="Lucas S."/>
        </authorList>
    </citation>
    <scope>NUCLEOTIDE SEQUENCE [MRNA] OF 1-283</scope>
    <source>
        <tissue>Kidney</tissue>
    </source>
</reference>
<reference key="5">
    <citation type="journal article" date="2010" name="Mol. Cell">
        <title>MAGE-RING protein complexes comprise a family of E3 ubiquitin ligases.</title>
        <authorList>
            <person name="Doyle J.M."/>
            <person name="Gao J."/>
            <person name="Wang J."/>
            <person name="Yang M."/>
            <person name="Potts P.R."/>
        </authorList>
    </citation>
    <scope>FUNCTION</scope>
    <scope>INTERACTION WITH LNX1; TRIM27 AND NSMCE1</scope>
</reference>
<reference key="6">
    <citation type="journal article" date="2018" name="Mol. Cell">
        <title>Cytosolic Iron-Sulfur Assembly Is Evolutionarily Tuned by a Cancer-Amplified Ubiquitin Ligase.</title>
        <authorList>
            <person name="Weon J.L."/>
            <person name="Yang S.W."/>
            <person name="Potts P.R."/>
        </authorList>
    </citation>
    <scope>FUNCTION</scope>
    <scope>INTERACTION WITH NSMCE1</scope>
    <scope>MUTAGENESIS OF 87-LYS-LYS-88</scope>
</reference>
<feature type="chain" id="PRO_0000156732" description="Melanoma-associated antigen F1">
    <location>
        <begin position="1"/>
        <end position="307"/>
    </location>
</feature>
<feature type="domain" description="MAGE" evidence="1">
    <location>
        <begin position="76"/>
        <end position="277"/>
    </location>
</feature>
<feature type="region of interest" description="Disordered" evidence="2">
    <location>
        <begin position="1"/>
        <end position="55"/>
    </location>
</feature>
<feature type="compositionally biased region" description="Basic and acidic residues" evidence="2">
    <location>
        <begin position="16"/>
        <end position="27"/>
    </location>
</feature>
<feature type="compositionally biased region" description="Basic and acidic residues" evidence="2">
    <location>
        <begin position="35"/>
        <end position="48"/>
    </location>
</feature>
<feature type="sequence variant" id="VAR_057651" description="In dbSNP:rs34540780.">
    <original>K</original>
    <variation>R</variation>
    <location>
        <position position="93"/>
    </location>
</feature>
<feature type="mutagenesis site" description="Loss of interaction with NSMCE1." evidence="5">
    <location>
        <begin position="87"/>
        <end position="88"/>
    </location>
</feature>
<feature type="sequence conflict" description="In Ref. 1; AAG30208, 2; AAG38606 and 3; AAH10056." evidence="8" ref="1 2 3">
    <original>A</original>
    <variation>S</variation>
    <location>
        <position position="66"/>
    </location>
</feature>
<feature type="sequence conflict" description="In Ref. 1; AAG30208, 2; AAG38606 and 3; AAH10056." evidence="8" ref="1 2 3">
    <original>E</original>
    <variation>EE</variation>
    <location>
        <position position="158"/>
    </location>
</feature>
<feature type="sequence conflict" description="In Ref. 1; AAG30208, 2; AAG38606 and 3; AAH10056." evidence="8" ref="1 2 3">
    <original>E</original>
    <variation>A</variation>
    <location>
        <position position="236"/>
    </location>
</feature>
<comment type="function">
    <text evidence="4 5">Enhances ubiquitin ligase activity of RING-type zinc finger-containing E3 ubiquitin ligases. Proposed to act through recruitment and/or stabilization of the E2 ubiquitin-conjugating enzyme at the E3:substrate complex. MAGEF1-NSMCE1 ubiquitin ligase complex promotes proteasomal degradation of MMS19, a key component of the cytosolic iron-sulfur protein assembly (CIA) machinery. Down-regulation of MMS19 impairs the activity of several DNA repair and metabolism enzymes such as ERCC2/XPD, FANCJ, RTEL1 and POLD1 that require iron-sulfur clusters as cofactors. May negatively regulate genome integrity by inhibiting homologous recombination-mediated double-strand break DNA repair (PubMed:29225034).</text>
</comment>
<comment type="subunit">
    <text evidence="4 5">Interacts (via MAGE domain) with RING-type zinc finger-containing E3 ubiquitin-protein ligases LNX1, TRIM27 and NSMCE1; the interaction is direct.</text>
</comment>
<comment type="interaction">
    <interactant intactId="EBI-5525855">
        <id>Q9HAY2</id>
    </interactant>
    <interactant intactId="EBI-724076">
        <id>Q99750</id>
        <label>MDFI</label>
    </interactant>
    <organismsDiffer>false</organismsDiffer>
    <experiments>4</experiments>
</comment>
<comment type="interaction">
    <interactant intactId="EBI-5525855">
        <id>Q9HAY2</id>
    </interactant>
    <interactant intactId="EBI-2557372">
        <id>Q8WV22</id>
        <label>NSMCE1</label>
    </interactant>
    <organismsDiffer>false</organismsDiffer>
    <experiments>2</experiments>
</comment>
<comment type="tissue specificity">
    <text evidence="3">Ubiquitous.</text>
</comment>
<sequence>MLQTPESRGLPVPQAEGEKDGGHDGETRAPTASQERPKEELGAGREEGAAEPALTRKGARALAAKALARRRAYRRLNRTVAELVQFLLVKDKKKSPITRSEMVKYVIGDLKILFPDIIARAAEHLRYVFGFELKQFDRKHHTYILINKLKPLEEEEEEDLGGDGPRLGLLMMILGLIYMRGNSAREAQVWEMLRRLGVQPSKYHFLFGYPKRLIMEDFVQQRYLSYRRVPHTNPPEYEFSWGPRSNLEISKMEVLGFVAKLHKKEPQHWPVQYREALADEADRARAKARAEASMRARASARAGIHLW</sequence>
<dbReference type="EMBL" id="AF295378">
    <property type="protein sequence ID" value="AAG30208.1"/>
    <property type="molecule type" value="mRNA"/>
</dbReference>
<dbReference type="EMBL" id="AC107294">
    <property type="status" value="NOT_ANNOTATED_CDS"/>
    <property type="molecule type" value="Genomic_DNA"/>
</dbReference>
<dbReference type="EMBL" id="BC010056">
    <property type="protein sequence ID" value="AAH10056.1"/>
    <property type="molecule type" value="mRNA"/>
</dbReference>
<dbReference type="EMBL" id="AF320910">
    <property type="protein sequence ID" value="AAG38606.1"/>
    <property type="molecule type" value="mRNA"/>
</dbReference>
<dbReference type="CCDS" id="CCDS3269.1"/>
<dbReference type="RefSeq" id="NP_071432.2">
    <property type="nucleotide sequence ID" value="NM_022149.4"/>
</dbReference>
<dbReference type="SMR" id="Q9HAY2"/>
<dbReference type="BioGRID" id="122067">
    <property type="interactions" value="36"/>
</dbReference>
<dbReference type="CORUM" id="Q9HAY2"/>
<dbReference type="FunCoup" id="Q9HAY2">
    <property type="interactions" value="788"/>
</dbReference>
<dbReference type="IntAct" id="Q9HAY2">
    <property type="interactions" value="19"/>
</dbReference>
<dbReference type="STRING" id="9606.ENSP00000315064"/>
<dbReference type="iPTMnet" id="Q9HAY2"/>
<dbReference type="PhosphoSitePlus" id="Q9HAY2"/>
<dbReference type="BioMuta" id="MAGEF1"/>
<dbReference type="DMDM" id="300669649"/>
<dbReference type="jPOST" id="Q9HAY2"/>
<dbReference type="MassIVE" id="Q9HAY2"/>
<dbReference type="PaxDb" id="9606-ENSP00000315064"/>
<dbReference type="PeptideAtlas" id="Q9HAY2"/>
<dbReference type="ProteomicsDB" id="81457"/>
<dbReference type="Pumba" id="Q9HAY2"/>
<dbReference type="Antibodypedia" id="33826">
    <property type="antibodies" value="163 antibodies from 28 providers"/>
</dbReference>
<dbReference type="DNASU" id="64110"/>
<dbReference type="Ensembl" id="ENST00000317897.5">
    <property type="protein sequence ID" value="ENSP00000315064.3"/>
    <property type="gene ID" value="ENSG00000177383.5"/>
</dbReference>
<dbReference type="GeneID" id="64110"/>
<dbReference type="KEGG" id="hsa:64110"/>
<dbReference type="MANE-Select" id="ENST00000317897.5">
    <property type="protein sequence ID" value="ENSP00000315064.3"/>
    <property type="RefSeq nucleotide sequence ID" value="NM_022149.5"/>
    <property type="RefSeq protein sequence ID" value="NP_071432.2"/>
</dbReference>
<dbReference type="UCSC" id="uc003fpa.4">
    <property type="organism name" value="human"/>
</dbReference>
<dbReference type="AGR" id="HGNC:29639"/>
<dbReference type="CTD" id="64110"/>
<dbReference type="DisGeNET" id="64110"/>
<dbReference type="GeneCards" id="MAGEF1"/>
<dbReference type="HGNC" id="HGNC:29639">
    <property type="gene designation" value="MAGEF1"/>
</dbReference>
<dbReference type="HPA" id="ENSG00000177383">
    <property type="expression patterns" value="Low tissue specificity"/>
</dbReference>
<dbReference type="MIM" id="609267">
    <property type="type" value="gene"/>
</dbReference>
<dbReference type="neXtProt" id="NX_Q9HAY2"/>
<dbReference type="OpenTargets" id="ENSG00000177383"/>
<dbReference type="PharmGKB" id="PA134920978"/>
<dbReference type="VEuPathDB" id="HostDB:ENSG00000177383"/>
<dbReference type="eggNOG" id="KOG4562">
    <property type="taxonomic scope" value="Eukaryota"/>
</dbReference>
<dbReference type="GeneTree" id="ENSGT00940000163736"/>
<dbReference type="HOGENOM" id="CLU_039582_2_0_1"/>
<dbReference type="InParanoid" id="Q9HAY2"/>
<dbReference type="OMA" id="TNPPEYE"/>
<dbReference type="OrthoDB" id="205198at2759"/>
<dbReference type="PAN-GO" id="Q9HAY2">
    <property type="GO annotations" value="2 GO annotations based on evolutionary models"/>
</dbReference>
<dbReference type="PhylomeDB" id="Q9HAY2"/>
<dbReference type="TreeFam" id="TF328505"/>
<dbReference type="PathwayCommons" id="Q9HAY2"/>
<dbReference type="SignaLink" id="Q9HAY2"/>
<dbReference type="BioGRID-ORCS" id="64110">
    <property type="hits" value="12 hits in 1156 CRISPR screens"/>
</dbReference>
<dbReference type="ChiTaRS" id="MAGEF1">
    <property type="organism name" value="human"/>
</dbReference>
<dbReference type="GenomeRNAi" id="64110"/>
<dbReference type="Pharos" id="Q9HAY2">
    <property type="development level" value="Tdark"/>
</dbReference>
<dbReference type="PRO" id="PR:Q9HAY2"/>
<dbReference type="Proteomes" id="UP000005640">
    <property type="component" value="Chromosome 3"/>
</dbReference>
<dbReference type="RNAct" id="Q9HAY2">
    <property type="molecule type" value="protein"/>
</dbReference>
<dbReference type="Bgee" id="ENSG00000177383">
    <property type="expression patterns" value="Expressed in ganglionic eminence and 192 other cell types or tissues"/>
</dbReference>
<dbReference type="GO" id="GO:0005634">
    <property type="term" value="C:nucleus"/>
    <property type="evidence" value="ECO:0000318"/>
    <property type="project" value="GO_Central"/>
</dbReference>
<dbReference type="GO" id="GO:2000042">
    <property type="term" value="P:negative regulation of double-strand break repair via homologous recombination"/>
    <property type="evidence" value="ECO:0000314"/>
    <property type="project" value="UniProtKB"/>
</dbReference>
<dbReference type="GO" id="GO:0000122">
    <property type="term" value="P:negative regulation of transcription by RNA polymerase II"/>
    <property type="evidence" value="ECO:0000318"/>
    <property type="project" value="GO_Central"/>
</dbReference>
<dbReference type="GO" id="GO:0016567">
    <property type="term" value="P:protein ubiquitination"/>
    <property type="evidence" value="ECO:0000314"/>
    <property type="project" value="UniProtKB"/>
</dbReference>
<dbReference type="GO" id="GO:0006511">
    <property type="term" value="P:ubiquitin-dependent protein catabolic process"/>
    <property type="evidence" value="ECO:0000314"/>
    <property type="project" value="UniProtKB"/>
</dbReference>
<dbReference type="FunFam" id="1.10.10.1200:FF:000003">
    <property type="entry name" value="MAGE family member F1"/>
    <property type="match status" value="1"/>
</dbReference>
<dbReference type="FunFam" id="1.10.10.1210:FF:000001">
    <property type="entry name" value="melanoma-associated antigen D1"/>
    <property type="match status" value="1"/>
</dbReference>
<dbReference type="Gene3D" id="1.10.10.1200">
    <property type="entry name" value="MAGE homology domain, winged helix WH1 motif"/>
    <property type="match status" value="1"/>
</dbReference>
<dbReference type="Gene3D" id="1.10.10.1210">
    <property type="entry name" value="MAGE homology domain, winged helix WH2 motif"/>
    <property type="match status" value="1"/>
</dbReference>
<dbReference type="InterPro" id="IPR037445">
    <property type="entry name" value="MAGE"/>
</dbReference>
<dbReference type="InterPro" id="IPR041898">
    <property type="entry name" value="MAGE_WH1"/>
</dbReference>
<dbReference type="InterPro" id="IPR041899">
    <property type="entry name" value="MAGE_WH2"/>
</dbReference>
<dbReference type="InterPro" id="IPR002190">
    <property type="entry name" value="MHD_dom"/>
</dbReference>
<dbReference type="PANTHER" id="PTHR11736:SF61">
    <property type="entry name" value="MELANOMA-ASSOCIATED ANTIGEN F1"/>
    <property type="match status" value="1"/>
</dbReference>
<dbReference type="PANTHER" id="PTHR11736">
    <property type="entry name" value="MELANOMA-ASSOCIATED ANTIGEN MAGE ANTIGEN"/>
    <property type="match status" value="1"/>
</dbReference>
<dbReference type="Pfam" id="PF01454">
    <property type="entry name" value="MAGE"/>
    <property type="match status" value="1"/>
</dbReference>
<dbReference type="SMART" id="SM01373">
    <property type="entry name" value="MAGE"/>
    <property type="match status" value="1"/>
</dbReference>
<dbReference type="PROSITE" id="PS50838">
    <property type="entry name" value="MAGE"/>
    <property type="match status" value="1"/>
</dbReference>
<gene>
    <name evidence="9" type="primary">MAGEF1</name>
</gene>
<protein>
    <recommendedName>
        <fullName evidence="8">Melanoma-associated antigen F1</fullName>
        <shortName evidence="6 7">MAGE-F1</shortName>
    </recommendedName>
    <alternativeName>
        <fullName>MAGE-F1 antigen</fullName>
    </alternativeName>
</protein>
<evidence type="ECO:0000255" key="1">
    <source>
        <dbReference type="PROSITE-ProRule" id="PRU00127"/>
    </source>
</evidence>
<evidence type="ECO:0000256" key="2">
    <source>
        <dbReference type="SAM" id="MobiDB-lite"/>
    </source>
</evidence>
<evidence type="ECO:0000269" key="3">
    <source>
    </source>
</evidence>
<evidence type="ECO:0000269" key="4">
    <source>
    </source>
</evidence>
<evidence type="ECO:0000269" key="5">
    <source>
    </source>
</evidence>
<evidence type="ECO:0000303" key="6">
    <source>
    </source>
</evidence>
<evidence type="ECO:0000303" key="7">
    <source>
    </source>
</evidence>
<evidence type="ECO:0000305" key="8"/>
<evidence type="ECO:0000312" key="9">
    <source>
        <dbReference type="HGNC" id="HGNC:29639"/>
    </source>
</evidence>